<keyword id="KW-0997">Cell inner membrane</keyword>
<keyword id="KW-1003">Cell membrane</keyword>
<keyword id="KW-0249">Electron transport</keyword>
<keyword id="KW-0285">Flavoprotein</keyword>
<keyword id="KW-0288">FMN</keyword>
<keyword id="KW-0472">Membrane</keyword>
<keyword id="KW-0597">Phosphoprotein</keyword>
<keyword id="KW-1278">Translocase</keyword>
<keyword id="KW-0812">Transmembrane</keyword>
<keyword id="KW-1133">Transmembrane helix</keyword>
<keyword id="KW-0813">Transport</keyword>
<accession>C3LTR2</accession>
<gene>
    <name evidence="1" type="primary">rnfD</name>
    <name type="ordered locus">VCM66_0970</name>
</gene>
<reference key="1">
    <citation type="journal article" date="2008" name="PLoS ONE">
        <title>A recalibrated molecular clock and independent origins for the cholera pandemic clones.</title>
        <authorList>
            <person name="Feng L."/>
            <person name="Reeves P.R."/>
            <person name="Lan R."/>
            <person name="Ren Y."/>
            <person name="Gao C."/>
            <person name="Zhou Z."/>
            <person name="Ren Y."/>
            <person name="Cheng J."/>
            <person name="Wang W."/>
            <person name="Wang J."/>
            <person name="Qian W."/>
            <person name="Li D."/>
            <person name="Wang L."/>
        </authorList>
    </citation>
    <scope>NUCLEOTIDE SEQUENCE [LARGE SCALE GENOMIC DNA]</scope>
    <source>
        <strain>M66-2</strain>
    </source>
</reference>
<evidence type="ECO:0000255" key="1">
    <source>
        <dbReference type="HAMAP-Rule" id="MF_00462"/>
    </source>
</evidence>
<name>RNFD_VIBCM</name>
<sequence>MAFFIASSPHLRSKRSTADVMRWVLACALPGLIAQTYFFGYGTLIQLLLAISVAVALEAGIMLLRKRSPISALRDYSAVVTAWLLAVAIPPLSPWWVVVIGLIFAIVIAKHLYGGLGQNPFNPAMIAYVVLLISFPVQMTSWMAPIKLTAEPSSLVDSFSLIFGGFDSDGLSLQQIRTGIDGITMATPLDAFKTSLKAGHTMSETLTQPQFSGFAGIGWEWVNIAYLLGGLILLKLRIIRWHIPMAMLAGLVFTALLAQLFAPGTTASPMIHLLSGATMLGAFFIATDPVSASTTDKGRLIYGFFIGAMVFLIRSWGGFPDGVAFAVLLANMCVPLIDYYTKPRTYGH</sequence>
<dbReference type="EC" id="7.-.-.-" evidence="1"/>
<dbReference type="EMBL" id="CP001233">
    <property type="protein sequence ID" value="ACP05288.1"/>
    <property type="molecule type" value="Genomic_DNA"/>
</dbReference>
<dbReference type="SMR" id="C3LTR2"/>
<dbReference type="KEGG" id="vcm:VCM66_0970"/>
<dbReference type="HOGENOM" id="CLU_042020_0_0_6"/>
<dbReference type="Proteomes" id="UP000001217">
    <property type="component" value="Chromosome I"/>
</dbReference>
<dbReference type="GO" id="GO:0005886">
    <property type="term" value="C:plasma membrane"/>
    <property type="evidence" value="ECO:0007669"/>
    <property type="project" value="UniProtKB-SubCell"/>
</dbReference>
<dbReference type="GO" id="GO:0022900">
    <property type="term" value="P:electron transport chain"/>
    <property type="evidence" value="ECO:0007669"/>
    <property type="project" value="UniProtKB-UniRule"/>
</dbReference>
<dbReference type="GO" id="GO:0055085">
    <property type="term" value="P:transmembrane transport"/>
    <property type="evidence" value="ECO:0007669"/>
    <property type="project" value="InterPro"/>
</dbReference>
<dbReference type="HAMAP" id="MF_00462">
    <property type="entry name" value="RsxD_RnfD"/>
    <property type="match status" value="1"/>
</dbReference>
<dbReference type="InterPro" id="IPR004338">
    <property type="entry name" value="NqrB/RnfD"/>
</dbReference>
<dbReference type="InterPro" id="IPR011303">
    <property type="entry name" value="RnfD_bac"/>
</dbReference>
<dbReference type="NCBIfam" id="NF002011">
    <property type="entry name" value="PRK00816.1"/>
    <property type="match status" value="1"/>
</dbReference>
<dbReference type="NCBIfam" id="TIGR01946">
    <property type="entry name" value="rnfD"/>
    <property type="match status" value="1"/>
</dbReference>
<dbReference type="PANTHER" id="PTHR30578">
    <property type="entry name" value="ELECTRON TRANSPORT COMPLEX PROTEIN RNFD"/>
    <property type="match status" value="1"/>
</dbReference>
<dbReference type="PANTHER" id="PTHR30578:SF0">
    <property type="entry name" value="ION-TRANSLOCATING OXIDOREDUCTASE COMPLEX SUBUNIT D"/>
    <property type="match status" value="1"/>
</dbReference>
<dbReference type="Pfam" id="PF03116">
    <property type="entry name" value="NQR2_RnfD_RnfE"/>
    <property type="match status" value="1"/>
</dbReference>
<feature type="chain" id="PRO_1000191682" description="Ion-translocating oxidoreductase complex subunit D">
    <location>
        <begin position="1"/>
        <end position="348"/>
    </location>
</feature>
<feature type="transmembrane region" description="Helical" evidence="1">
    <location>
        <begin position="23"/>
        <end position="43"/>
    </location>
</feature>
<feature type="transmembrane region" description="Helical" evidence="1">
    <location>
        <begin position="44"/>
        <end position="64"/>
    </location>
</feature>
<feature type="transmembrane region" description="Helical" evidence="1">
    <location>
        <begin position="72"/>
        <end position="91"/>
    </location>
</feature>
<feature type="transmembrane region" description="Helical" evidence="1">
    <location>
        <begin position="126"/>
        <end position="146"/>
    </location>
</feature>
<feature type="transmembrane region" description="Helical" evidence="1">
    <location>
        <begin position="214"/>
        <end position="234"/>
    </location>
</feature>
<feature type="transmembrane region" description="Helical" evidence="1">
    <location>
        <begin position="243"/>
        <end position="263"/>
    </location>
</feature>
<feature type="transmembrane region" description="Helical" evidence="1">
    <location>
        <begin position="266"/>
        <end position="286"/>
    </location>
</feature>
<feature type="transmembrane region" description="Helical" evidence="1">
    <location>
        <begin position="300"/>
        <end position="320"/>
    </location>
</feature>
<feature type="transmembrane region" description="Helical" evidence="1">
    <location>
        <begin position="321"/>
        <end position="341"/>
    </location>
</feature>
<feature type="modified residue" description="FMN phosphoryl threonine" evidence="1">
    <location>
        <position position="187"/>
    </location>
</feature>
<organism>
    <name type="scientific">Vibrio cholerae serotype O1 (strain M66-2)</name>
    <dbReference type="NCBI Taxonomy" id="579112"/>
    <lineage>
        <taxon>Bacteria</taxon>
        <taxon>Pseudomonadati</taxon>
        <taxon>Pseudomonadota</taxon>
        <taxon>Gammaproteobacteria</taxon>
        <taxon>Vibrionales</taxon>
        <taxon>Vibrionaceae</taxon>
        <taxon>Vibrio</taxon>
    </lineage>
</organism>
<protein>
    <recommendedName>
        <fullName evidence="1">Ion-translocating oxidoreductase complex subunit D</fullName>
        <ecNumber evidence="1">7.-.-.-</ecNumber>
    </recommendedName>
    <alternativeName>
        <fullName evidence="1">Rnf electron transport complex subunit D</fullName>
    </alternativeName>
</protein>
<comment type="function">
    <text evidence="1">Part of a membrane-bound complex that couples electron transfer with translocation of ions across the membrane.</text>
</comment>
<comment type="cofactor">
    <cofactor evidence="1">
        <name>FMN</name>
        <dbReference type="ChEBI" id="CHEBI:58210"/>
    </cofactor>
</comment>
<comment type="subunit">
    <text evidence="1">The complex is composed of six subunits: RnfA, RnfB, RnfC, RnfD, RnfE and RnfG.</text>
</comment>
<comment type="subcellular location">
    <subcellularLocation>
        <location evidence="1">Cell inner membrane</location>
        <topology evidence="1">Multi-pass membrane protein</topology>
    </subcellularLocation>
</comment>
<comment type="similarity">
    <text evidence="1">Belongs to the NqrB/RnfD family.</text>
</comment>
<proteinExistence type="inferred from homology"/>